<dbReference type="EC" id="3.5.1.23"/>
<dbReference type="EMBL" id="AF323976">
    <property type="protein sequence ID" value="AAL55991.1"/>
    <property type="molecule type" value="mRNA"/>
</dbReference>
<dbReference type="EMBL" id="AE014134">
    <property type="protein sequence ID" value="AAF53869.2"/>
    <property type="molecule type" value="Genomic_DNA"/>
</dbReference>
<dbReference type="EMBL" id="AY071232">
    <property type="protein sequence ID" value="AAL48854.1"/>
    <property type="molecule type" value="mRNA"/>
</dbReference>
<dbReference type="RefSeq" id="NP_610020.1">
    <property type="nucleotide sequence ID" value="NM_136176.4"/>
</dbReference>
<dbReference type="SMR" id="Q9VIP7"/>
<dbReference type="BioGRID" id="75346">
    <property type="interactions" value="2"/>
</dbReference>
<dbReference type="FunCoup" id="Q9VIP7">
    <property type="interactions" value="755"/>
</dbReference>
<dbReference type="STRING" id="7227.FBpp0303611"/>
<dbReference type="GlyGen" id="Q9VIP7">
    <property type="glycosylation" value="1 site"/>
</dbReference>
<dbReference type="PaxDb" id="7227-FBpp0303611"/>
<dbReference type="DNASU" id="250736"/>
<dbReference type="EnsemblMetazoa" id="FBtr0081331">
    <property type="protein sequence ID" value="FBpp0080863"/>
    <property type="gene ID" value="FBgn0045064"/>
</dbReference>
<dbReference type="GeneID" id="250736"/>
<dbReference type="KEGG" id="dme:Dmel_CG13969"/>
<dbReference type="AGR" id="FB:FBgn0045064"/>
<dbReference type="CTD" id="250736"/>
<dbReference type="FlyBase" id="FBgn0045064">
    <property type="gene designation" value="bwa"/>
</dbReference>
<dbReference type="VEuPathDB" id="VectorBase:FBgn0045064"/>
<dbReference type="eggNOG" id="KOG2329">
    <property type="taxonomic scope" value="Eukaryota"/>
</dbReference>
<dbReference type="GeneTree" id="ENSGT00730000110920"/>
<dbReference type="InParanoid" id="Q9VIP7"/>
<dbReference type="OrthoDB" id="187171at2759"/>
<dbReference type="PhylomeDB" id="Q9VIP7"/>
<dbReference type="BRENDA" id="3.5.1.23">
    <property type="organism ID" value="1994"/>
</dbReference>
<dbReference type="Reactome" id="R-DME-9845614">
    <property type="pathway name" value="Sphingolipid catabolism"/>
</dbReference>
<dbReference type="BioGRID-ORCS" id="250736">
    <property type="hits" value="0 hits in 3 CRISPR screens"/>
</dbReference>
<dbReference type="ChiTaRS" id="bwa">
    <property type="organism name" value="fly"/>
</dbReference>
<dbReference type="GenomeRNAi" id="250736"/>
<dbReference type="PRO" id="PR:Q9VIP7"/>
<dbReference type="Proteomes" id="UP000000803">
    <property type="component" value="Chromosome 2L"/>
</dbReference>
<dbReference type="Bgee" id="FBgn0045064">
    <property type="expression patterns" value="Expressed in male accessory gland main cell (Drosophila) in male reproductive gland and 151 other cell types or tissues"/>
</dbReference>
<dbReference type="ExpressionAtlas" id="Q9VIP7">
    <property type="expression patterns" value="baseline and differential"/>
</dbReference>
<dbReference type="GO" id="GO:0005783">
    <property type="term" value="C:endoplasmic reticulum"/>
    <property type="evidence" value="ECO:0000250"/>
    <property type="project" value="UniProtKB"/>
</dbReference>
<dbReference type="GO" id="GO:0016020">
    <property type="term" value="C:membrane"/>
    <property type="evidence" value="ECO:0007669"/>
    <property type="project" value="UniProtKB-SubCell"/>
</dbReference>
<dbReference type="GO" id="GO:0046872">
    <property type="term" value="F:metal ion binding"/>
    <property type="evidence" value="ECO:0007669"/>
    <property type="project" value="UniProtKB-KW"/>
</dbReference>
<dbReference type="GO" id="GO:0017040">
    <property type="term" value="F:N-acylsphingosine amidohydrolase activity"/>
    <property type="evidence" value="ECO:0000314"/>
    <property type="project" value="FlyBase"/>
</dbReference>
<dbReference type="GO" id="GO:0007420">
    <property type="term" value="P:brain development"/>
    <property type="evidence" value="ECO:0000315"/>
    <property type="project" value="FlyBase"/>
</dbReference>
<dbReference type="GO" id="GO:0046514">
    <property type="term" value="P:ceramide catabolic process"/>
    <property type="evidence" value="ECO:0000314"/>
    <property type="project" value="FlyBase"/>
</dbReference>
<dbReference type="GO" id="GO:0019216">
    <property type="term" value="P:regulation of lipid metabolic process"/>
    <property type="evidence" value="ECO:0000250"/>
    <property type="project" value="UniProtKB"/>
</dbReference>
<dbReference type="GO" id="GO:0006665">
    <property type="term" value="P:sphingolipid metabolic process"/>
    <property type="evidence" value="ECO:0000250"/>
    <property type="project" value="UniProtKB"/>
</dbReference>
<dbReference type="InterPro" id="IPR008901">
    <property type="entry name" value="ACER"/>
</dbReference>
<dbReference type="PANTHER" id="PTHR46139">
    <property type="entry name" value="ALKALINE CERAMIDASE"/>
    <property type="match status" value="1"/>
</dbReference>
<dbReference type="PANTHER" id="PTHR46139:SF3">
    <property type="entry name" value="ALKALINE CERAMIDASE"/>
    <property type="match status" value="1"/>
</dbReference>
<dbReference type="Pfam" id="PF05875">
    <property type="entry name" value="Ceramidase"/>
    <property type="match status" value="1"/>
</dbReference>
<feature type="chain" id="PRO_0000247752" description="Alkaline ceramidase">
    <location>
        <begin position="1"/>
        <end position="283"/>
    </location>
</feature>
<feature type="transmembrane region" description="Helical" evidence="3">
    <location>
        <begin position="43"/>
        <end position="63"/>
    </location>
</feature>
<feature type="transmembrane region" description="Helical" evidence="3">
    <location>
        <begin position="69"/>
        <end position="89"/>
    </location>
</feature>
<feature type="transmembrane region" description="Helical" evidence="3">
    <location>
        <begin position="98"/>
        <end position="118"/>
    </location>
</feature>
<feature type="transmembrane region" description="Helical" evidence="3">
    <location>
        <begin position="134"/>
        <end position="151"/>
    </location>
</feature>
<feature type="transmembrane region" description="Helical" evidence="3">
    <location>
        <begin position="154"/>
        <end position="174"/>
    </location>
</feature>
<feature type="transmembrane region" description="Helical" evidence="3">
    <location>
        <begin position="187"/>
        <end position="209"/>
    </location>
</feature>
<feature type="transmembrane region" description="Helical" evidence="3">
    <location>
        <begin position="222"/>
        <end position="242"/>
    </location>
</feature>
<feature type="binding site" evidence="2">
    <location>
        <position position="28"/>
    </location>
    <ligand>
        <name>Ca(2+)</name>
        <dbReference type="ChEBI" id="CHEBI:29108"/>
    </ligand>
</feature>
<feature type="binding site" evidence="2">
    <location>
        <position position="29"/>
    </location>
    <ligand>
        <name>Ca(2+)</name>
        <dbReference type="ChEBI" id="CHEBI:29108"/>
    </ligand>
</feature>
<feature type="binding site" evidence="2">
    <location>
        <position position="31"/>
    </location>
    <ligand>
        <name>Ca(2+)</name>
        <dbReference type="ChEBI" id="CHEBI:29108"/>
    </ligand>
</feature>
<feature type="binding site" evidence="2">
    <location>
        <position position="33"/>
    </location>
    <ligand>
        <name>Ca(2+)</name>
        <dbReference type="ChEBI" id="CHEBI:29108"/>
    </ligand>
</feature>
<feature type="binding site" evidence="2">
    <location>
        <position position="42"/>
    </location>
    <ligand>
        <name>Ca(2+)</name>
        <dbReference type="ChEBI" id="CHEBI:29108"/>
    </ligand>
</feature>
<feature type="binding site" evidence="2">
    <location>
        <position position="92"/>
    </location>
    <ligand>
        <name>Zn(2+)</name>
        <dbReference type="ChEBI" id="CHEBI:29105"/>
        <note>catalytic</note>
    </ligand>
</feature>
<feature type="binding site" evidence="2">
    <location>
        <position position="221"/>
    </location>
    <ligand>
        <name>Zn(2+)</name>
        <dbReference type="ChEBI" id="CHEBI:29105"/>
        <note>catalytic</note>
    </ligand>
</feature>
<feature type="binding site" evidence="2">
    <location>
        <position position="225"/>
    </location>
    <ligand>
        <name>Zn(2+)</name>
        <dbReference type="ChEBI" id="CHEBI:29105"/>
        <note>catalytic</note>
    </ligand>
</feature>
<feature type="sequence conflict" description="In Ref. 1; AAL55991." evidence="6" ref="1">
    <original>H</original>
    <variation>Q</variation>
    <location>
        <position position="19"/>
    </location>
</feature>
<reference key="1">
    <citation type="submission" date="2000-11" db="EMBL/GenBank/DDBJ databases">
        <authorList>
            <person name="Pascual A."/>
            <person name="Boquet I."/>
            <person name="Preat T."/>
        </authorList>
    </citation>
    <scope>NUCLEOTIDE SEQUENCE [MRNA]</scope>
</reference>
<reference key="2">
    <citation type="journal article" date="2000" name="Science">
        <title>The genome sequence of Drosophila melanogaster.</title>
        <authorList>
            <person name="Adams M.D."/>
            <person name="Celniker S.E."/>
            <person name="Holt R.A."/>
            <person name="Evans C.A."/>
            <person name="Gocayne J.D."/>
            <person name="Amanatides P.G."/>
            <person name="Scherer S.E."/>
            <person name="Li P.W."/>
            <person name="Hoskins R.A."/>
            <person name="Galle R.F."/>
            <person name="George R.A."/>
            <person name="Lewis S.E."/>
            <person name="Richards S."/>
            <person name="Ashburner M."/>
            <person name="Henderson S.N."/>
            <person name="Sutton G.G."/>
            <person name="Wortman J.R."/>
            <person name="Yandell M.D."/>
            <person name="Zhang Q."/>
            <person name="Chen L.X."/>
            <person name="Brandon R.C."/>
            <person name="Rogers Y.-H.C."/>
            <person name="Blazej R.G."/>
            <person name="Champe M."/>
            <person name="Pfeiffer B.D."/>
            <person name="Wan K.H."/>
            <person name="Doyle C."/>
            <person name="Baxter E.G."/>
            <person name="Helt G."/>
            <person name="Nelson C.R."/>
            <person name="Miklos G.L.G."/>
            <person name="Abril J.F."/>
            <person name="Agbayani A."/>
            <person name="An H.-J."/>
            <person name="Andrews-Pfannkoch C."/>
            <person name="Baldwin D."/>
            <person name="Ballew R.M."/>
            <person name="Basu A."/>
            <person name="Baxendale J."/>
            <person name="Bayraktaroglu L."/>
            <person name="Beasley E.M."/>
            <person name="Beeson K.Y."/>
            <person name="Benos P.V."/>
            <person name="Berman B.P."/>
            <person name="Bhandari D."/>
            <person name="Bolshakov S."/>
            <person name="Borkova D."/>
            <person name="Botchan M.R."/>
            <person name="Bouck J."/>
            <person name="Brokstein P."/>
            <person name="Brottier P."/>
            <person name="Burtis K.C."/>
            <person name="Busam D.A."/>
            <person name="Butler H."/>
            <person name="Cadieu E."/>
            <person name="Center A."/>
            <person name="Chandra I."/>
            <person name="Cherry J.M."/>
            <person name="Cawley S."/>
            <person name="Dahlke C."/>
            <person name="Davenport L.B."/>
            <person name="Davies P."/>
            <person name="de Pablos B."/>
            <person name="Delcher A."/>
            <person name="Deng Z."/>
            <person name="Mays A.D."/>
            <person name="Dew I."/>
            <person name="Dietz S.M."/>
            <person name="Dodson K."/>
            <person name="Doup L.E."/>
            <person name="Downes M."/>
            <person name="Dugan-Rocha S."/>
            <person name="Dunkov B.C."/>
            <person name="Dunn P."/>
            <person name="Durbin K.J."/>
            <person name="Evangelista C.C."/>
            <person name="Ferraz C."/>
            <person name="Ferriera S."/>
            <person name="Fleischmann W."/>
            <person name="Fosler C."/>
            <person name="Gabrielian A.E."/>
            <person name="Garg N.S."/>
            <person name="Gelbart W.M."/>
            <person name="Glasser K."/>
            <person name="Glodek A."/>
            <person name="Gong F."/>
            <person name="Gorrell J.H."/>
            <person name="Gu Z."/>
            <person name="Guan P."/>
            <person name="Harris M."/>
            <person name="Harris N.L."/>
            <person name="Harvey D.A."/>
            <person name="Heiman T.J."/>
            <person name="Hernandez J.R."/>
            <person name="Houck J."/>
            <person name="Hostin D."/>
            <person name="Houston K.A."/>
            <person name="Howland T.J."/>
            <person name="Wei M.-H."/>
            <person name="Ibegwam C."/>
            <person name="Jalali M."/>
            <person name="Kalush F."/>
            <person name="Karpen G.H."/>
            <person name="Ke Z."/>
            <person name="Kennison J.A."/>
            <person name="Ketchum K.A."/>
            <person name="Kimmel B.E."/>
            <person name="Kodira C.D."/>
            <person name="Kraft C.L."/>
            <person name="Kravitz S."/>
            <person name="Kulp D."/>
            <person name="Lai Z."/>
            <person name="Lasko P."/>
            <person name="Lei Y."/>
            <person name="Levitsky A.A."/>
            <person name="Li J.H."/>
            <person name="Li Z."/>
            <person name="Liang Y."/>
            <person name="Lin X."/>
            <person name="Liu X."/>
            <person name="Mattei B."/>
            <person name="McIntosh T.C."/>
            <person name="McLeod M.P."/>
            <person name="McPherson D."/>
            <person name="Merkulov G."/>
            <person name="Milshina N.V."/>
            <person name="Mobarry C."/>
            <person name="Morris J."/>
            <person name="Moshrefi A."/>
            <person name="Mount S.M."/>
            <person name="Moy M."/>
            <person name="Murphy B."/>
            <person name="Murphy L."/>
            <person name="Muzny D.M."/>
            <person name="Nelson D.L."/>
            <person name="Nelson D.R."/>
            <person name="Nelson K.A."/>
            <person name="Nixon K."/>
            <person name="Nusskern D.R."/>
            <person name="Pacleb J.M."/>
            <person name="Palazzolo M."/>
            <person name="Pittman G.S."/>
            <person name="Pan S."/>
            <person name="Pollard J."/>
            <person name="Puri V."/>
            <person name="Reese M.G."/>
            <person name="Reinert K."/>
            <person name="Remington K."/>
            <person name="Saunders R.D.C."/>
            <person name="Scheeler F."/>
            <person name="Shen H."/>
            <person name="Shue B.C."/>
            <person name="Siden-Kiamos I."/>
            <person name="Simpson M."/>
            <person name="Skupski M.P."/>
            <person name="Smith T.J."/>
            <person name="Spier E."/>
            <person name="Spradling A.C."/>
            <person name="Stapleton M."/>
            <person name="Strong R."/>
            <person name="Sun E."/>
            <person name="Svirskas R."/>
            <person name="Tector C."/>
            <person name="Turner R."/>
            <person name="Venter E."/>
            <person name="Wang A.H."/>
            <person name="Wang X."/>
            <person name="Wang Z.-Y."/>
            <person name="Wassarman D.A."/>
            <person name="Weinstock G.M."/>
            <person name="Weissenbach J."/>
            <person name="Williams S.M."/>
            <person name="Woodage T."/>
            <person name="Worley K.C."/>
            <person name="Wu D."/>
            <person name="Yang S."/>
            <person name="Yao Q.A."/>
            <person name="Ye J."/>
            <person name="Yeh R.-F."/>
            <person name="Zaveri J.S."/>
            <person name="Zhan M."/>
            <person name="Zhang G."/>
            <person name="Zhao Q."/>
            <person name="Zheng L."/>
            <person name="Zheng X.H."/>
            <person name="Zhong F.N."/>
            <person name="Zhong W."/>
            <person name="Zhou X."/>
            <person name="Zhu S.C."/>
            <person name="Zhu X."/>
            <person name="Smith H.O."/>
            <person name="Gibbs R.A."/>
            <person name="Myers E.W."/>
            <person name="Rubin G.M."/>
            <person name="Venter J.C."/>
        </authorList>
    </citation>
    <scope>NUCLEOTIDE SEQUENCE [LARGE SCALE GENOMIC DNA]</scope>
    <source>
        <strain>Berkeley</strain>
    </source>
</reference>
<reference key="3">
    <citation type="journal article" date="2002" name="Genome Biol.">
        <title>Annotation of the Drosophila melanogaster euchromatic genome: a systematic review.</title>
        <authorList>
            <person name="Misra S."/>
            <person name="Crosby M.A."/>
            <person name="Mungall C.J."/>
            <person name="Matthews B.B."/>
            <person name="Campbell K.S."/>
            <person name="Hradecky P."/>
            <person name="Huang Y."/>
            <person name="Kaminker J.S."/>
            <person name="Millburn G.H."/>
            <person name="Prochnik S.E."/>
            <person name="Smith C.D."/>
            <person name="Tupy J.L."/>
            <person name="Whitfield E.J."/>
            <person name="Bayraktaroglu L."/>
            <person name="Berman B.P."/>
            <person name="Bettencourt B.R."/>
            <person name="Celniker S.E."/>
            <person name="de Grey A.D.N.J."/>
            <person name="Drysdale R.A."/>
            <person name="Harris N.L."/>
            <person name="Richter J."/>
            <person name="Russo S."/>
            <person name="Schroeder A.J."/>
            <person name="Shu S.Q."/>
            <person name="Stapleton M."/>
            <person name="Yamada C."/>
            <person name="Ashburner M."/>
            <person name="Gelbart W.M."/>
            <person name="Rubin G.M."/>
            <person name="Lewis S.E."/>
        </authorList>
    </citation>
    <scope>GENOME REANNOTATION</scope>
    <source>
        <strain>Berkeley</strain>
    </source>
</reference>
<reference key="4">
    <citation type="journal article" date="2002" name="Genome Biol.">
        <title>A Drosophila full-length cDNA resource.</title>
        <authorList>
            <person name="Stapleton M."/>
            <person name="Carlson J.W."/>
            <person name="Brokstein P."/>
            <person name="Yu C."/>
            <person name="Champe M."/>
            <person name="George R.A."/>
            <person name="Guarin H."/>
            <person name="Kronmiller B."/>
            <person name="Pacleb J.M."/>
            <person name="Park S."/>
            <person name="Wan K.H."/>
            <person name="Rubin G.M."/>
            <person name="Celniker S.E."/>
        </authorList>
    </citation>
    <scope>NUCLEOTIDE SEQUENCE [LARGE SCALE MRNA]</scope>
    <source>
        <strain>Berkeley</strain>
        <tissue>Embryo</tissue>
    </source>
</reference>
<reference key="5">
    <citation type="journal article" date="2000" name="J. Neurobiol.">
        <title>Central brain postembryonic development in Drosophila: implication of genes expressed at the interhemispheric junction.</title>
        <authorList>
            <person name="Boquet I."/>
            <person name="Hitier R."/>
            <person name="Dumas M."/>
            <person name="Chaminade M."/>
            <person name="Preat T."/>
        </authorList>
    </citation>
    <scope>DISRUPTION PHENOTYPE</scope>
    <scope>TISSUE SPECIFICITY</scope>
</reference>
<reference key="6">
    <citation type="journal article" date="2002" name="Mech. Dev.">
        <title>Metabolism of sphingosine 1-phosphate and lysophosphatidic acid: a genome wide analysis of gene expression in Drosophila.</title>
        <authorList>
            <person name="Renault A.D."/>
            <person name="Starz-Gaiano M."/>
            <person name="Lehmann R."/>
        </authorList>
    </citation>
    <scope>TISSUE SPECIFICITY</scope>
</reference>
<name>ACASE_DROME</name>
<proteinExistence type="evidence at transcript level"/>
<keyword id="KW-0106">Calcium</keyword>
<keyword id="KW-0378">Hydrolase</keyword>
<keyword id="KW-0443">Lipid metabolism</keyword>
<keyword id="KW-0472">Membrane</keyword>
<keyword id="KW-0479">Metal-binding</keyword>
<keyword id="KW-1185">Reference proteome</keyword>
<keyword id="KW-0812">Transmembrane</keyword>
<keyword id="KW-1133">Transmembrane helix</keyword>
<keyword id="KW-0862">Zinc</keyword>
<gene>
    <name type="primary">bwa</name>
    <name type="ORF">CG13969</name>
</gene>
<protein>
    <recommendedName>
        <fullName>Alkaline ceramidase</fullName>
        <shortName>AlkCDase</shortName>
        <ecNumber>3.5.1.23</ecNumber>
    </recommendedName>
    <alternativeName>
        <fullName>Alkaline N-acylsphingosine amidohydrolase</fullName>
    </alternativeName>
    <alternativeName>
        <fullName>Alkaline acylsphingosine deacylase</fullName>
    </alternativeName>
    <alternativeName>
        <fullName>Protein brainwashing</fullName>
    </alternativeName>
</protein>
<evidence type="ECO:0000250" key="1"/>
<evidence type="ECO:0000250" key="2">
    <source>
        <dbReference type="UniProtKB" id="Q9NUN7"/>
    </source>
</evidence>
<evidence type="ECO:0000255" key="3"/>
<evidence type="ECO:0000269" key="4">
    <source>
    </source>
</evidence>
<evidence type="ECO:0000269" key="5">
    <source>
    </source>
</evidence>
<evidence type="ECO:0000305" key="6"/>
<comment type="function">
    <text evidence="1">Hydrolyzes the sphingolipid ceramide into sphingosine and free fatty acid.</text>
</comment>
<comment type="catalytic activity">
    <reaction>
        <text>an N-acylsphing-4-enine + H2O = sphing-4-enine + a fatty acid</text>
        <dbReference type="Rhea" id="RHEA:20856"/>
        <dbReference type="ChEBI" id="CHEBI:15377"/>
        <dbReference type="ChEBI" id="CHEBI:28868"/>
        <dbReference type="ChEBI" id="CHEBI:52639"/>
        <dbReference type="ChEBI" id="CHEBI:57756"/>
        <dbReference type="EC" id="3.5.1.23"/>
    </reaction>
</comment>
<comment type="cofactor">
    <cofactor evidence="2">
        <name>Zn(2+)</name>
        <dbReference type="ChEBI" id="CHEBI:29105"/>
    </cofactor>
</comment>
<comment type="subcellular location">
    <subcellularLocation>
        <location evidence="6">Membrane</location>
        <topology evidence="6">Multi-pass membrane protein</topology>
    </subcellularLocation>
</comment>
<comment type="tissue specificity">
    <text evidence="4 5">Expressed in the central midgut of late embryos. In brain, it is present at the interhemispheric junction and in groups of cells in the central brain.</text>
</comment>
<comment type="disruption phenotype">
    <text evidence="4">Discrete defect in the ellipsoid body.</text>
</comment>
<comment type="similarity">
    <text evidence="6">Belongs to the alkaline ceramidase family.</text>
</comment>
<accession>Q9VIP7</accession>
<accession>Q8SYZ0</accession>
<accession>Q8WSF4</accession>
<sequence>MGGMGGGGLLDIYAMAWEHLRPGSSPVDWCEGNYLISSNIAEFVNTFSNFLFILLPPVLIMLFKEYGRFVTPGIHVIWVLLIVVGLSSMYFHATLSLIGQLLDELAILWVFMAAFSLFYPKRYYPKFVKNDRKTFSWLMLLSAIAATGLSWWKPIVNAFVLMFMSVPTMVMLYTELQRVSDQRVYRLGIRSTTVWAVAVFCWINDRIFCEAWSSINFPYLHGFWHIFIFIAAYTVLVLFAYFYVESELPQRQPLLKYWPKNEFEFGIPFISIRNPGKALRNTI</sequence>
<organism>
    <name type="scientific">Drosophila melanogaster</name>
    <name type="common">Fruit fly</name>
    <dbReference type="NCBI Taxonomy" id="7227"/>
    <lineage>
        <taxon>Eukaryota</taxon>
        <taxon>Metazoa</taxon>
        <taxon>Ecdysozoa</taxon>
        <taxon>Arthropoda</taxon>
        <taxon>Hexapoda</taxon>
        <taxon>Insecta</taxon>
        <taxon>Pterygota</taxon>
        <taxon>Neoptera</taxon>
        <taxon>Endopterygota</taxon>
        <taxon>Diptera</taxon>
        <taxon>Brachycera</taxon>
        <taxon>Muscomorpha</taxon>
        <taxon>Ephydroidea</taxon>
        <taxon>Drosophilidae</taxon>
        <taxon>Drosophila</taxon>
        <taxon>Sophophora</taxon>
    </lineage>
</organism>